<organism>
    <name type="scientific">Arabidopsis thaliana</name>
    <name type="common">Mouse-ear cress</name>
    <dbReference type="NCBI Taxonomy" id="3702"/>
    <lineage>
        <taxon>Eukaryota</taxon>
        <taxon>Viridiplantae</taxon>
        <taxon>Streptophyta</taxon>
        <taxon>Embryophyta</taxon>
        <taxon>Tracheophyta</taxon>
        <taxon>Spermatophyta</taxon>
        <taxon>Magnoliopsida</taxon>
        <taxon>eudicotyledons</taxon>
        <taxon>Gunneridae</taxon>
        <taxon>Pentapetalae</taxon>
        <taxon>rosids</taxon>
        <taxon>malvids</taxon>
        <taxon>Brassicales</taxon>
        <taxon>Brassicaceae</taxon>
        <taxon>Camelineae</taxon>
        <taxon>Arabidopsis</taxon>
    </lineage>
</organism>
<gene>
    <name evidence="7 8" type="primary">RFC3</name>
    <name evidence="10" type="ordered locus">At3g17170</name>
    <name evidence="11" type="ORF">K14A17.25</name>
</gene>
<reference key="1">
    <citation type="journal article" date="2003" name="Plant J.">
        <title>Mutations in a gene for plastid ribosomal protein S6-like protein reveal a novel developmental process required for the correct organization of lateral root meristem in Arabidopsis.</title>
        <authorList>
            <person name="Horiguchi G."/>
            <person name="Kodama H."/>
            <person name="Iba K."/>
        </authorList>
    </citation>
    <scope>NUCLEOTIDE SEQUENCE [MRNA]</scope>
    <scope>FUNCTION</scope>
    <scope>DISRUPTION PHENOTYPE</scope>
    <scope>TISSUE SPECIFICITY</scope>
    <scope>SUBCELLULAR LOCATION</scope>
    <source>
        <strain>cv. Columbia</strain>
        <tissue>Leaf</tissue>
    </source>
</reference>
<reference key="2">
    <citation type="journal article" date="2000" name="DNA Res.">
        <title>Structural analysis of Arabidopsis thaliana chromosome 3. I. Sequence features of the regions of 4,504,864 bp covered by sixty P1 and TAC clones.</title>
        <authorList>
            <person name="Sato S."/>
            <person name="Nakamura Y."/>
            <person name="Kaneko T."/>
            <person name="Katoh T."/>
            <person name="Asamizu E."/>
            <person name="Tabata S."/>
        </authorList>
    </citation>
    <scope>NUCLEOTIDE SEQUENCE [LARGE SCALE GENOMIC DNA]</scope>
    <source>
        <strain>cv. Columbia</strain>
    </source>
</reference>
<reference key="3">
    <citation type="journal article" date="2017" name="Plant J.">
        <title>Araport11: a complete reannotation of the Arabidopsis thaliana reference genome.</title>
        <authorList>
            <person name="Cheng C.Y."/>
            <person name="Krishnakumar V."/>
            <person name="Chan A.P."/>
            <person name="Thibaud-Nissen F."/>
            <person name="Schobel S."/>
            <person name="Town C.D."/>
        </authorList>
    </citation>
    <scope>GENOME REANNOTATION</scope>
    <source>
        <strain>cv. Columbia</strain>
    </source>
</reference>
<reference key="4">
    <citation type="journal article" date="2003" name="Science">
        <title>Empirical analysis of transcriptional activity in the Arabidopsis genome.</title>
        <authorList>
            <person name="Yamada K."/>
            <person name="Lim J."/>
            <person name="Dale J.M."/>
            <person name="Chen H."/>
            <person name="Shinn P."/>
            <person name="Palm C.J."/>
            <person name="Southwick A.M."/>
            <person name="Wu H.C."/>
            <person name="Kim C.J."/>
            <person name="Nguyen M."/>
            <person name="Pham P.K."/>
            <person name="Cheuk R.F."/>
            <person name="Karlin-Newmann G."/>
            <person name="Liu S.X."/>
            <person name="Lam B."/>
            <person name="Sakano H."/>
            <person name="Wu T."/>
            <person name="Yu G."/>
            <person name="Miranda M."/>
            <person name="Quach H.L."/>
            <person name="Tripp M."/>
            <person name="Chang C.H."/>
            <person name="Lee J.M."/>
            <person name="Toriumi M.J."/>
            <person name="Chan M.M."/>
            <person name="Tang C.C."/>
            <person name="Onodera C.S."/>
            <person name="Deng J.M."/>
            <person name="Akiyama K."/>
            <person name="Ansari Y."/>
            <person name="Arakawa T."/>
            <person name="Banh J."/>
            <person name="Banno F."/>
            <person name="Bowser L."/>
            <person name="Brooks S.Y."/>
            <person name="Carninci P."/>
            <person name="Chao Q."/>
            <person name="Choy N."/>
            <person name="Enju A."/>
            <person name="Goldsmith A.D."/>
            <person name="Gurjal M."/>
            <person name="Hansen N.F."/>
            <person name="Hayashizaki Y."/>
            <person name="Johnson-Hopson C."/>
            <person name="Hsuan V.W."/>
            <person name="Iida K."/>
            <person name="Karnes M."/>
            <person name="Khan S."/>
            <person name="Koesema E."/>
            <person name="Ishida J."/>
            <person name="Jiang P.X."/>
            <person name="Jones T."/>
            <person name="Kawai J."/>
            <person name="Kamiya A."/>
            <person name="Meyers C."/>
            <person name="Nakajima M."/>
            <person name="Narusaka M."/>
            <person name="Seki M."/>
            <person name="Sakurai T."/>
            <person name="Satou M."/>
            <person name="Tamse R."/>
            <person name="Vaysberg M."/>
            <person name="Wallender E.K."/>
            <person name="Wong C."/>
            <person name="Yamamura Y."/>
            <person name="Yuan S."/>
            <person name="Shinozaki K."/>
            <person name="Davis R.W."/>
            <person name="Theologis A."/>
            <person name="Ecker J.R."/>
        </authorList>
    </citation>
    <scope>NUCLEOTIDE SEQUENCE [LARGE SCALE MRNA]</scope>
    <source>
        <strain>cv. Columbia</strain>
    </source>
</reference>
<reference key="5">
    <citation type="submission" date="2002-03" db="EMBL/GenBank/DDBJ databases">
        <title>Full-length cDNA from Arabidopsis thaliana.</title>
        <authorList>
            <person name="Brover V.V."/>
            <person name="Troukhan M.E."/>
            <person name="Alexandrov N.A."/>
            <person name="Lu Y.-P."/>
            <person name="Flavell R.B."/>
            <person name="Feldmann K.A."/>
        </authorList>
    </citation>
    <scope>NUCLEOTIDE SEQUENCE [LARGE SCALE MRNA]</scope>
</reference>
<reference key="6">
    <citation type="journal article" date="2001" name="Plant Sci.">
        <title>Characterization of Arabidopsis mutants that are associated with altered C18 unsaturated fatty acid metabolism.</title>
        <authorList>
            <person name="Horiguchi G."/>
            <person name="Kodama H."/>
            <person name="Iba K."/>
        </authorList>
    </citation>
    <scope>FUNCTION</scope>
    <scope>DISRUPTION PHENOTYPE</scope>
    <source>
        <strain>cv. Columbia</strain>
        <strain>cv. Landsberg erecta</strain>
    </source>
</reference>
<reference key="7">
    <citation type="journal article" date="2018" name="Biol. Open">
        <title>Plastid translation is essential for lateral root stem cell patterning in Arabidopsis thaliana.</title>
        <authorList>
            <person name="Nakata M.T."/>
            <person name="Sato M."/>
            <person name="Wakazaki M."/>
            <person name="Sato N."/>
            <person name="Kojima K."/>
            <person name="Sekine A."/>
            <person name="Nakamura S."/>
            <person name="Shikanai T."/>
            <person name="Toyooka K."/>
            <person name="Tsukaya H."/>
            <person name="Horiguchi G."/>
        </authorList>
    </citation>
    <scope>FUNCTION</scope>
    <scope>DISRUPTION PHENOTYPE</scope>
    <scope>SUBCELLULAR LOCATION</scope>
    <scope>DEVELOPMENTAL STAGE</scope>
    <source>
        <strain>cv. Columbia</strain>
        <strain>cv. Landsberg erecta</strain>
    </source>
</reference>
<reference key="8">
    <citation type="journal article" date="2020" name="Plants (Basel)">
        <title>The bRPS6-family protein RFC3 prevents interference by the splicing factor CFM3b during plastid rRNA biogenesis in Arabidopsis thaliana.</title>
        <authorList>
            <person name="Nagashima Y."/>
            <person name="Ohshiro K."/>
            <person name="Iwase A."/>
            <person name="Nakata M.T."/>
            <person name="Maekawa S."/>
            <person name="Horiguchi G."/>
        </authorList>
    </citation>
    <scope>FUNCTION</scope>
    <scope>DISRUPTION PHENOTYPE</scope>
    <scope>INTERACTION WITH CFM3B/SPRT2</scope>
    <scope>SUBCELLULAR LOCATION</scope>
    <source>
        <strain>cv. Columbia</strain>
        <strain>cv. Landsberg erecta</strain>
    </source>
</reference>
<evidence type="ECO:0000255" key="1"/>
<evidence type="ECO:0000256" key="2">
    <source>
        <dbReference type="SAM" id="MobiDB-lite"/>
    </source>
</evidence>
<evidence type="ECO:0000269" key="3">
    <source>
    </source>
</evidence>
<evidence type="ECO:0000269" key="4">
    <source>
    </source>
</evidence>
<evidence type="ECO:0000269" key="5">
    <source>
    </source>
</evidence>
<evidence type="ECO:0000269" key="6">
    <source ref="6"/>
</evidence>
<evidence type="ECO:0000303" key="7">
    <source>
    </source>
</evidence>
<evidence type="ECO:0000303" key="8">
    <source ref="6"/>
</evidence>
<evidence type="ECO:0000305" key="9"/>
<evidence type="ECO:0000312" key="10">
    <source>
        <dbReference type="Araport" id="AT3G17170"/>
    </source>
</evidence>
<evidence type="ECO:0000312" key="11">
    <source>
        <dbReference type="EMBL" id="BAA94995.1"/>
    </source>
</evidence>
<keyword id="KW-0150">Chloroplast</keyword>
<keyword id="KW-0217">Developmental protein</keyword>
<keyword id="KW-0251">Elongation factor</keyword>
<keyword id="KW-0934">Plastid</keyword>
<keyword id="KW-0648">Protein biosynthesis</keyword>
<keyword id="KW-1185">Reference proteome</keyword>
<keyword id="KW-0694">RNA-binding</keyword>
<keyword id="KW-0699">rRNA-binding</keyword>
<keyword id="KW-0809">Transit peptide</keyword>
<protein>
    <recommendedName>
        <fullName evidence="7 8">Protein REGULATOR OF FATTY ACID COMPOSITION 3, chloroplastic</fullName>
    </recommendedName>
</protein>
<sequence>MESLLHASSSLVSLRPRIDGRDSFINPSRVCLNPSLGRRGSKPLPLVAAAKKKKSKKDDNHNFSARPDEATGPFPESILLKEKKIDEEGDLLPEFADAEEKELYQFLDLQLQSDLNEERMRHYEVVYLIHEKHAEEVESINQKVQDYLKEKKGKVWRFSDWGMRRLAYKIQKAENAHYILMNFEIEAKYLNEFKGLLDSDERVIRHLVMKRDEAITEDCPPPPEFHSVRAGDEYYDDDEEEEIEEDEDEGEGEDEEDADNIEYEVDDDGNVVMVLYGDEEEGEEEEDGASEQEEGQDKSTNGRRETRRTVNVGG</sequence>
<dbReference type="EMBL" id="AB057424">
    <property type="protein sequence ID" value="BAB67768.1"/>
    <property type="molecule type" value="mRNA"/>
</dbReference>
<dbReference type="EMBL" id="AB026636">
    <property type="protein sequence ID" value="BAA94995.1"/>
    <property type="status" value="ALT_SEQ"/>
    <property type="molecule type" value="Genomic_DNA"/>
</dbReference>
<dbReference type="EMBL" id="CP002686">
    <property type="protein sequence ID" value="AEE75914.1"/>
    <property type="molecule type" value="Genomic_DNA"/>
</dbReference>
<dbReference type="EMBL" id="AY074580">
    <property type="protein sequence ID" value="AAL67119.1"/>
    <property type="molecule type" value="mRNA"/>
</dbReference>
<dbReference type="EMBL" id="AY101540">
    <property type="protein sequence ID" value="AAM26661.1"/>
    <property type="molecule type" value="mRNA"/>
</dbReference>
<dbReference type="EMBL" id="AY085649">
    <property type="protein sequence ID" value="AAM62870.1"/>
    <property type="molecule type" value="mRNA"/>
</dbReference>
<dbReference type="RefSeq" id="NP_566568.1">
    <property type="nucleotide sequence ID" value="NM_112593.3"/>
</dbReference>
<dbReference type="SMR" id="Q948R9"/>
<dbReference type="FunCoup" id="Q948R9">
    <property type="interactions" value="829"/>
</dbReference>
<dbReference type="STRING" id="3702.Q948R9"/>
<dbReference type="PaxDb" id="3702-AT3G17170.1"/>
<dbReference type="ProteomicsDB" id="175447"/>
<dbReference type="EnsemblPlants" id="AT3G17170.1">
    <property type="protein sequence ID" value="AT3G17170.1"/>
    <property type="gene ID" value="AT3G17170"/>
</dbReference>
<dbReference type="GeneID" id="820974"/>
<dbReference type="Gramene" id="AT3G17170.1">
    <property type="protein sequence ID" value="AT3G17170.1"/>
    <property type="gene ID" value="AT3G17170"/>
</dbReference>
<dbReference type="KEGG" id="ath:AT3G17170"/>
<dbReference type="Araport" id="AT3G17170"/>
<dbReference type="TAIR" id="AT3G17170">
    <property type="gene designation" value="RFC3"/>
</dbReference>
<dbReference type="eggNOG" id="ENOG502QU7T">
    <property type="taxonomic scope" value="Eukaryota"/>
</dbReference>
<dbReference type="HOGENOM" id="CLU_055734_0_0_1"/>
<dbReference type="InParanoid" id="Q948R9"/>
<dbReference type="OMA" id="NIQMESD"/>
<dbReference type="OrthoDB" id="669828at2759"/>
<dbReference type="PRO" id="PR:Q948R9"/>
<dbReference type="Proteomes" id="UP000006548">
    <property type="component" value="Chromosome 3"/>
</dbReference>
<dbReference type="ExpressionAtlas" id="Q948R9">
    <property type="expression patterns" value="baseline and differential"/>
</dbReference>
<dbReference type="GO" id="GO:0009507">
    <property type="term" value="C:chloroplast"/>
    <property type="evidence" value="ECO:0000314"/>
    <property type="project" value="UniProtKB"/>
</dbReference>
<dbReference type="GO" id="GO:0009536">
    <property type="term" value="C:plastid"/>
    <property type="evidence" value="ECO:0000314"/>
    <property type="project" value="UniProtKB"/>
</dbReference>
<dbReference type="GO" id="GO:0005840">
    <property type="term" value="C:ribosome"/>
    <property type="evidence" value="ECO:0007669"/>
    <property type="project" value="InterPro"/>
</dbReference>
<dbReference type="GO" id="GO:0019843">
    <property type="term" value="F:rRNA binding"/>
    <property type="evidence" value="ECO:0007669"/>
    <property type="project" value="UniProtKB-KW"/>
</dbReference>
<dbReference type="GO" id="GO:0003735">
    <property type="term" value="F:structural constituent of ribosome"/>
    <property type="evidence" value="ECO:0007669"/>
    <property type="project" value="InterPro"/>
</dbReference>
<dbReference type="GO" id="GO:0003746">
    <property type="term" value="F:translation elongation factor activity"/>
    <property type="evidence" value="ECO:0007669"/>
    <property type="project" value="UniProtKB-KW"/>
</dbReference>
<dbReference type="GO" id="GO:0051644">
    <property type="term" value="P:plastid localization"/>
    <property type="evidence" value="ECO:0000315"/>
    <property type="project" value="UniProtKB"/>
</dbReference>
<dbReference type="GO" id="GO:0042794">
    <property type="term" value="P:plastid rRNA transcription"/>
    <property type="evidence" value="ECO:0000315"/>
    <property type="project" value="UniProtKB"/>
</dbReference>
<dbReference type="GO" id="GO:0042793">
    <property type="term" value="P:plastid transcription"/>
    <property type="evidence" value="ECO:0000315"/>
    <property type="project" value="UniProtKB"/>
</dbReference>
<dbReference type="GO" id="GO:0080022">
    <property type="term" value="P:primary root development"/>
    <property type="evidence" value="ECO:0000315"/>
    <property type="project" value="UniProtKB"/>
</dbReference>
<dbReference type="GO" id="GO:0010468">
    <property type="term" value="P:regulation of gene expression"/>
    <property type="evidence" value="ECO:0000315"/>
    <property type="project" value="UniProtKB"/>
</dbReference>
<dbReference type="GO" id="GO:2000023">
    <property type="term" value="P:regulation of lateral root development"/>
    <property type="evidence" value="ECO:0000315"/>
    <property type="project" value="UniProtKB"/>
</dbReference>
<dbReference type="GO" id="GO:0010109">
    <property type="term" value="P:regulation of photosynthesis"/>
    <property type="evidence" value="ECO:0000315"/>
    <property type="project" value="UniProtKB"/>
</dbReference>
<dbReference type="GO" id="GO:0010082">
    <property type="term" value="P:regulation of root meristem growth"/>
    <property type="evidence" value="ECO:0000315"/>
    <property type="project" value="UniProtKB"/>
</dbReference>
<dbReference type="GO" id="GO:2001279">
    <property type="term" value="P:regulation of unsaturated fatty acid biosynthetic process"/>
    <property type="evidence" value="ECO:0000315"/>
    <property type="project" value="UniProtKB"/>
</dbReference>
<dbReference type="GO" id="GO:0008380">
    <property type="term" value="P:RNA splicing"/>
    <property type="evidence" value="ECO:0000315"/>
    <property type="project" value="UniProtKB"/>
</dbReference>
<dbReference type="GO" id="GO:0010071">
    <property type="term" value="P:root meristem specification"/>
    <property type="evidence" value="ECO:0000315"/>
    <property type="project" value="UniProtKB"/>
</dbReference>
<dbReference type="GO" id="GO:0006364">
    <property type="term" value="P:rRNA processing"/>
    <property type="evidence" value="ECO:0000315"/>
    <property type="project" value="UniProtKB"/>
</dbReference>
<dbReference type="CDD" id="cd00473">
    <property type="entry name" value="bS6"/>
    <property type="match status" value="1"/>
</dbReference>
<dbReference type="FunFam" id="3.30.70.60:FF:000002">
    <property type="entry name" value="30S ribosomal protein S6"/>
    <property type="match status" value="1"/>
</dbReference>
<dbReference type="Gene3D" id="3.30.70.60">
    <property type="match status" value="1"/>
</dbReference>
<dbReference type="HAMAP" id="MF_00360">
    <property type="entry name" value="Ribosomal_bS6"/>
    <property type="match status" value="1"/>
</dbReference>
<dbReference type="InterPro" id="IPR000529">
    <property type="entry name" value="Ribosomal_bS6"/>
</dbReference>
<dbReference type="InterPro" id="IPR035980">
    <property type="entry name" value="Ribosomal_bS6_sf"/>
</dbReference>
<dbReference type="InterPro" id="IPR020814">
    <property type="entry name" value="Ribosomal_S6_plastid/chlpt"/>
</dbReference>
<dbReference type="InterPro" id="IPR014717">
    <property type="entry name" value="Transl_elong_EF1B/ribsomal_bS6"/>
</dbReference>
<dbReference type="NCBIfam" id="TIGR00166">
    <property type="entry name" value="S6"/>
    <property type="match status" value="1"/>
</dbReference>
<dbReference type="PANTHER" id="PTHR21011">
    <property type="entry name" value="MITOCHONDRIAL 28S RIBOSOMAL PROTEIN S6"/>
    <property type="match status" value="1"/>
</dbReference>
<dbReference type="PANTHER" id="PTHR21011:SF1">
    <property type="entry name" value="SMALL RIBOSOMAL SUBUNIT PROTEIN BS6M"/>
    <property type="match status" value="1"/>
</dbReference>
<dbReference type="Pfam" id="PF01250">
    <property type="entry name" value="Ribosomal_S6"/>
    <property type="match status" value="1"/>
</dbReference>
<dbReference type="SUPFAM" id="SSF54995">
    <property type="entry name" value="Ribosomal protein S6"/>
    <property type="match status" value="1"/>
</dbReference>
<comment type="function">
    <text evidence="3 4 5 6">Prevents non-specific action of the splicing factor CFM3b during plastid rRNA biogenesis to improve the accuracy of plastid rRNA processing (PubMed:32143506). Required for plastid functions such as photosynthesis, intracellular distribution, plastid rRNAs biosynthesis and plastid gene expression in roots (PubMed:29367414, PubMed:32143506). Involved in a sucrose-conditional process important for the organization of root lateral and apical meristems (e.g. establishment of RAM from pericycle and symplasmic connectivity), and subsequent primary and lateral roots development (PubMed:12581310, PubMed:29367414, Ref.6). Modulates C18 unsaturated fatty acid metabolism (Ref.6).</text>
</comment>
<comment type="subunit">
    <text evidence="5">Interacts with CFM3B/SPRT2 in plastids.</text>
</comment>
<comment type="subcellular location">
    <subcellularLocation>
        <location evidence="3 4">Plastid</location>
        <location evidence="3 4">Chloroplast</location>
    </subcellularLocation>
    <subcellularLocation>
        <location evidence="4 5">Plastid</location>
    </subcellularLocation>
    <text evidence="4 5">Present in root plastids and chloroplasts in leaves.</text>
</comment>
<comment type="tissue specificity">
    <text evidence="3">Expressed ubiquitously in roots, leaves, stems, flower buds, flowers and siliques.</text>
</comment>
<comment type="developmental stage">
    <text evidence="4">In underground tissues, observed in root tips and differentiated portions of primary roots, as well as in lateral root primordia.</text>
</comment>
<comment type="disruption phenotype">
    <text evidence="3 4 5 6">Decreased leaf photosynthetic activity, reduced accumulation of plastid rRNAs (both mature and immature) in roots and altered root plastid gene expression leading to small plants with pale-green leaves (PubMed:29367414, PubMed:32143506). Abnormal intracellular distribution of plastids (PubMed:29367414). Altered fatty acid composition of membrane lipids leading to an increased oleic acid (18:1) level at the expense of alpha-linolenic acid (18:3) level among total fatty acids, especially in root tissues (Ref.6). Aberrant lateral root phenotype that lack stem cells and associated with disrupted stem cell patterning and changes in expression of several root stem cell regulators (PubMed:12581310, PubMed:29367414, PubMed:32143506, Ref.6). Exhibits a sucrose-conditional defect in the patterning of distal elements in the primary and lateral roots meristems (PubMed:12581310, PubMed:29367414). Abnormal symplasmic connectivity between primary root and lateral root primordia (PubMed:29367414). The double mutant rfc3-2 sprt2-1 is rescued for primary and lateral root development as well as for plastid rRNA level compared to the single mutant rfc3-2 (PubMed:32143506).</text>
</comment>
<comment type="similarity">
    <text evidence="9">Belongs to the bacterial ribosomal protein bS6 family.</text>
</comment>
<comment type="sequence caution" evidence="9">
    <conflict type="erroneous gene model prediction">
        <sequence resource="EMBL-CDS" id="BAA94995"/>
    </conflict>
</comment>
<feature type="transit peptide" description="Chloroplast" evidence="1">
    <location>
        <begin position="1"/>
        <end position="47"/>
    </location>
</feature>
<feature type="chain" id="PRO_0000455730" description="Protein REGULATOR OF FATTY ACID COMPOSITION 3, chloroplastic">
    <location>
        <begin position="48"/>
        <end position="314"/>
    </location>
</feature>
<feature type="region of interest" description="Disordered" evidence="2">
    <location>
        <begin position="49"/>
        <end position="73"/>
    </location>
</feature>
<feature type="region of interest" description="Disordered" evidence="2">
    <location>
        <begin position="214"/>
        <end position="314"/>
    </location>
</feature>
<feature type="compositionally biased region" description="Basic and acidic residues" evidence="2">
    <location>
        <begin position="56"/>
        <end position="69"/>
    </location>
</feature>
<feature type="compositionally biased region" description="Acidic residues" evidence="2">
    <location>
        <begin position="233"/>
        <end position="269"/>
    </location>
</feature>
<feature type="compositionally biased region" description="Acidic residues" evidence="2">
    <location>
        <begin position="277"/>
        <end position="294"/>
    </location>
</feature>
<feature type="compositionally biased region" description="Basic and acidic residues" evidence="2">
    <location>
        <begin position="295"/>
        <end position="308"/>
    </location>
</feature>
<feature type="sequence conflict" description="In Ref. 5; AAM62870." evidence="9" ref="5">
    <original>E</original>
    <variation>G</variation>
    <location>
        <position position="242"/>
    </location>
</feature>
<accession>Q948R9</accession>
<accession>A0A178V657</accession>
<accession>Q8LE34</accession>
<accession>Q9LSN0</accession>
<name>RFAC3_ARATH</name>
<proteinExistence type="evidence at protein level"/>